<protein>
    <recommendedName>
        <fullName evidence="1">NAD(P)H-quinone oxidoreductase subunit I, chloroplastic</fullName>
        <ecNumber evidence="1">7.1.1.-</ecNumber>
    </recommendedName>
    <alternativeName>
        <fullName evidence="1">NAD(P)H dehydrogenase subunit I</fullName>
        <shortName evidence="1">NDH subunit I</shortName>
    </alternativeName>
    <alternativeName>
        <fullName evidence="1">NADH-plastoquinone oxidoreductase subunit I</fullName>
    </alternativeName>
</protein>
<keyword id="KW-0004">4Fe-4S</keyword>
<keyword id="KW-0150">Chloroplast</keyword>
<keyword id="KW-0408">Iron</keyword>
<keyword id="KW-0411">Iron-sulfur</keyword>
<keyword id="KW-0472">Membrane</keyword>
<keyword id="KW-0479">Metal-binding</keyword>
<keyword id="KW-0520">NAD</keyword>
<keyword id="KW-0521">NADP</keyword>
<keyword id="KW-0934">Plastid</keyword>
<keyword id="KW-0618">Plastoquinone</keyword>
<keyword id="KW-0874">Quinone</keyword>
<keyword id="KW-0677">Repeat</keyword>
<keyword id="KW-0793">Thylakoid</keyword>
<keyword id="KW-1278">Translocase</keyword>
<sequence length="165" mass="19187">MFSMMNGLQHYGQQALRAARYIGQSFMVTLEHMNRLPITVQYPYEKIIPSERFRGRIHFEFDKCIACEVCVRVCPINLPVVDWELIKSMRKKQLKSYSIDFGVCIFCGNCVEYCPTNCLSMTEEYELATYDRHELNYDQIALSRLPFSIVQDSTIQAHSSLGYLS</sequence>
<organism>
    <name type="scientific">Psilotum nudum</name>
    <name type="common">Whisk fern</name>
    <name type="synonym">Lycopodium nudum</name>
    <dbReference type="NCBI Taxonomy" id="3240"/>
    <lineage>
        <taxon>Eukaryota</taxon>
        <taxon>Viridiplantae</taxon>
        <taxon>Streptophyta</taxon>
        <taxon>Embryophyta</taxon>
        <taxon>Tracheophyta</taxon>
        <taxon>Polypodiopsida</taxon>
        <taxon>Ophioglossidae</taxon>
        <taxon>Psilotales</taxon>
        <taxon>Psilotaceae</taxon>
        <taxon>Psilotum</taxon>
    </lineage>
</organism>
<proteinExistence type="inferred from homology"/>
<gene>
    <name evidence="1" type="primary">ndhI</name>
</gene>
<feature type="chain" id="PRO_0000245672" description="NAD(P)H-quinone oxidoreductase subunit I, chloroplastic">
    <location>
        <begin position="1"/>
        <end position="165"/>
    </location>
</feature>
<feature type="domain" description="4Fe-4S ferredoxin-type 1" evidence="1">
    <location>
        <begin position="55"/>
        <end position="84"/>
    </location>
</feature>
<feature type="domain" description="4Fe-4S ferredoxin-type 2" evidence="1">
    <location>
        <begin position="95"/>
        <end position="124"/>
    </location>
</feature>
<feature type="binding site" evidence="1">
    <location>
        <position position="64"/>
    </location>
    <ligand>
        <name>[4Fe-4S] cluster</name>
        <dbReference type="ChEBI" id="CHEBI:49883"/>
        <label>1</label>
    </ligand>
</feature>
<feature type="binding site" evidence="1">
    <location>
        <position position="67"/>
    </location>
    <ligand>
        <name>[4Fe-4S] cluster</name>
        <dbReference type="ChEBI" id="CHEBI:49883"/>
        <label>1</label>
    </ligand>
</feature>
<feature type="binding site" evidence="1">
    <location>
        <position position="70"/>
    </location>
    <ligand>
        <name>[4Fe-4S] cluster</name>
        <dbReference type="ChEBI" id="CHEBI:49883"/>
        <label>1</label>
    </ligand>
</feature>
<feature type="binding site" evidence="1">
    <location>
        <position position="74"/>
    </location>
    <ligand>
        <name>[4Fe-4S] cluster</name>
        <dbReference type="ChEBI" id="CHEBI:49883"/>
        <label>2</label>
    </ligand>
</feature>
<feature type="binding site" evidence="1">
    <location>
        <position position="104"/>
    </location>
    <ligand>
        <name>[4Fe-4S] cluster</name>
        <dbReference type="ChEBI" id="CHEBI:49883"/>
        <label>2</label>
    </ligand>
</feature>
<feature type="binding site" evidence="1">
    <location>
        <position position="107"/>
    </location>
    <ligand>
        <name>[4Fe-4S] cluster</name>
        <dbReference type="ChEBI" id="CHEBI:49883"/>
        <label>2</label>
    </ligand>
</feature>
<feature type="binding site" evidence="1">
    <location>
        <position position="110"/>
    </location>
    <ligand>
        <name>[4Fe-4S] cluster</name>
        <dbReference type="ChEBI" id="CHEBI:49883"/>
        <label>2</label>
    </ligand>
</feature>
<feature type="binding site" evidence="1">
    <location>
        <position position="114"/>
    </location>
    <ligand>
        <name>[4Fe-4S] cluster</name>
        <dbReference type="ChEBI" id="CHEBI:49883"/>
        <label>1</label>
    </ligand>
</feature>
<dbReference type="EC" id="7.1.1.-" evidence="1"/>
<dbReference type="EMBL" id="AP004638">
    <property type="protein sequence ID" value="BAB84278.1"/>
    <property type="molecule type" value="Genomic_DNA"/>
</dbReference>
<dbReference type="RefSeq" id="NP_569689.1">
    <property type="nucleotide sequence ID" value="NC_003386.1"/>
</dbReference>
<dbReference type="SMR" id="Q8WHX5"/>
<dbReference type="GeneID" id="2545124"/>
<dbReference type="GO" id="GO:0009535">
    <property type="term" value="C:chloroplast thylakoid membrane"/>
    <property type="evidence" value="ECO:0007669"/>
    <property type="project" value="UniProtKB-SubCell"/>
</dbReference>
<dbReference type="GO" id="GO:0051539">
    <property type="term" value="F:4 iron, 4 sulfur cluster binding"/>
    <property type="evidence" value="ECO:0007669"/>
    <property type="project" value="UniProtKB-KW"/>
</dbReference>
<dbReference type="GO" id="GO:0005506">
    <property type="term" value="F:iron ion binding"/>
    <property type="evidence" value="ECO:0007669"/>
    <property type="project" value="UniProtKB-UniRule"/>
</dbReference>
<dbReference type="GO" id="GO:0008137">
    <property type="term" value="F:NADH dehydrogenase (ubiquinone) activity"/>
    <property type="evidence" value="ECO:0007669"/>
    <property type="project" value="InterPro"/>
</dbReference>
<dbReference type="GO" id="GO:0048038">
    <property type="term" value="F:quinone binding"/>
    <property type="evidence" value="ECO:0007669"/>
    <property type="project" value="UniProtKB-KW"/>
</dbReference>
<dbReference type="GO" id="GO:0019684">
    <property type="term" value="P:photosynthesis, light reaction"/>
    <property type="evidence" value="ECO:0007669"/>
    <property type="project" value="UniProtKB-UniRule"/>
</dbReference>
<dbReference type="Gene3D" id="3.30.70.3270">
    <property type="match status" value="1"/>
</dbReference>
<dbReference type="HAMAP" id="MF_01351">
    <property type="entry name" value="NDH1_NuoI"/>
    <property type="match status" value="1"/>
</dbReference>
<dbReference type="InterPro" id="IPR017896">
    <property type="entry name" value="4Fe4S_Fe-S-bd"/>
</dbReference>
<dbReference type="InterPro" id="IPR017900">
    <property type="entry name" value="4Fe4S_Fe_S_CS"/>
</dbReference>
<dbReference type="InterPro" id="IPR010226">
    <property type="entry name" value="NADH_quinone_OxRdtase_chainI"/>
</dbReference>
<dbReference type="InterPro" id="IPR004497">
    <property type="entry name" value="NDHI"/>
</dbReference>
<dbReference type="NCBIfam" id="TIGR00403">
    <property type="entry name" value="ndhI"/>
    <property type="match status" value="1"/>
</dbReference>
<dbReference type="NCBIfam" id="TIGR01971">
    <property type="entry name" value="NuoI"/>
    <property type="match status" value="1"/>
</dbReference>
<dbReference type="NCBIfam" id="NF004537">
    <property type="entry name" value="PRK05888.1-3"/>
    <property type="match status" value="1"/>
</dbReference>
<dbReference type="PANTHER" id="PTHR47275">
    <property type="entry name" value="NAD(P)H-QUINONE OXIDOREDUCTASE SUBUNIT I, CHLOROPLASTIC"/>
    <property type="match status" value="1"/>
</dbReference>
<dbReference type="PANTHER" id="PTHR47275:SF1">
    <property type="entry name" value="NAD(P)H-QUINONE OXIDOREDUCTASE SUBUNIT I, CHLOROPLASTIC"/>
    <property type="match status" value="1"/>
</dbReference>
<dbReference type="Pfam" id="PF12838">
    <property type="entry name" value="Fer4_7"/>
    <property type="match status" value="1"/>
</dbReference>
<dbReference type="SUPFAM" id="SSF54862">
    <property type="entry name" value="4Fe-4S ferredoxins"/>
    <property type="match status" value="1"/>
</dbReference>
<dbReference type="PROSITE" id="PS00198">
    <property type="entry name" value="4FE4S_FER_1"/>
    <property type="match status" value="2"/>
</dbReference>
<dbReference type="PROSITE" id="PS51379">
    <property type="entry name" value="4FE4S_FER_2"/>
    <property type="match status" value="2"/>
</dbReference>
<reference key="1">
    <citation type="journal article" date="2004" name="Mol. Biol. Evol.">
        <title>Chloroplast phylogeny indicates that bryophytes are monophyletic.</title>
        <authorList>
            <person name="Nishiyama T."/>
            <person name="Wolf P.G."/>
            <person name="Kugita M."/>
            <person name="Sinclair R.B."/>
            <person name="Sugita M."/>
            <person name="Sugiura C."/>
            <person name="Wakasugi T."/>
            <person name="Yamada K."/>
            <person name="Yoshinaga K."/>
            <person name="Yamaguchi K."/>
            <person name="Ueda K."/>
            <person name="Hasebe M."/>
        </authorList>
    </citation>
    <scope>NUCLEOTIDE SEQUENCE [LARGE SCALE GENOMIC DNA]</scope>
    <source>
        <strain>Kingyoku</strain>
    </source>
</reference>
<evidence type="ECO:0000255" key="1">
    <source>
        <dbReference type="HAMAP-Rule" id="MF_01351"/>
    </source>
</evidence>
<accession>Q8WHX5</accession>
<comment type="function">
    <text evidence="1">NDH shuttles electrons from NAD(P)H:plastoquinone, via FMN and iron-sulfur (Fe-S) centers, to quinones in the photosynthetic chain and possibly in a chloroplast respiratory chain. The immediate electron acceptor for the enzyme in this species is believed to be plastoquinone. Couples the redox reaction to proton translocation, and thus conserves the redox energy in a proton gradient.</text>
</comment>
<comment type="catalytic activity">
    <reaction evidence="1">
        <text>a plastoquinone + NADH + (n+1) H(+)(in) = a plastoquinol + NAD(+) + n H(+)(out)</text>
        <dbReference type="Rhea" id="RHEA:42608"/>
        <dbReference type="Rhea" id="RHEA-COMP:9561"/>
        <dbReference type="Rhea" id="RHEA-COMP:9562"/>
        <dbReference type="ChEBI" id="CHEBI:15378"/>
        <dbReference type="ChEBI" id="CHEBI:17757"/>
        <dbReference type="ChEBI" id="CHEBI:57540"/>
        <dbReference type="ChEBI" id="CHEBI:57945"/>
        <dbReference type="ChEBI" id="CHEBI:62192"/>
    </reaction>
</comment>
<comment type="catalytic activity">
    <reaction evidence="1">
        <text>a plastoquinone + NADPH + (n+1) H(+)(in) = a plastoquinol + NADP(+) + n H(+)(out)</text>
        <dbReference type="Rhea" id="RHEA:42612"/>
        <dbReference type="Rhea" id="RHEA-COMP:9561"/>
        <dbReference type="Rhea" id="RHEA-COMP:9562"/>
        <dbReference type="ChEBI" id="CHEBI:15378"/>
        <dbReference type="ChEBI" id="CHEBI:17757"/>
        <dbReference type="ChEBI" id="CHEBI:57783"/>
        <dbReference type="ChEBI" id="CHEBI:58349"/>
        <dbReference type="ChEBI" id="CHEBI:62192"/>
    </reaction>
</comment>
<comment type="cofactor">
    <cofactor evidence="1">
        <name>[4Fe-4S] cluster</name>
        <dbReference type="ChEBI" id="CHEBI:49883"/>
    </cofactor>
    <text evidence="1">Binds 2 [4Fe-4S] clusters per subunit.</text>
</comment>
<comment type="subunit">
    <text evidence="1">NDH is composed of at least 16 different subunits, 5 of which are encoded in the nucleus.</text>
</comment>
<comment type="subcellular location">
    <subcellularLocation>
        <location evidence="1">Plastid</location>
        <location evidence="1">Chloroplast thylakoid membrane</location>
        <topology evidence="1">Peripheral membrane protein</topology>
    </subcellularLocation>
</comment>
<comment type="similarity">
    <text evidence="1">Belongs to the complex I 23 kDa subunit family.</text>
</comment>
<name>NDHI_PSINU</name>
<geneLocation type="chloroplast"/>